<name>DPS_CROS8</name>
<keyword id="KW-0963">Cytoplasm</keyword>
<keyword id="KW-0226">DNA condensation</keyword>
<keyword id="KW-0238">DNA-binding</keyword>
<keyword id="KW-0408">Iron</keyword>
<keyword id="KW-0409">Iron storage</keyword>
<keyword id="KW-0479">Metal-binding</keyword>
<keyword id="KW-0560">Oxidoreductase</keyword>
<keyword id="KW-1185">Reference proteome</keyword>
<feature type="chain" id="PRO_1000024416" description="DNA protection during starvation protein">
    <location>
        <begin position="1"/>
        <end position="167"/>
    </location>
</feature>
<feature type="binding site" evidence="1">
    <location>
        <position position="51"/>
    </location>
    <ligand>
        <name>Fe cation</name>
        <dbReference type="ChEBI" id="CHEBI:24875"/>
    </ligand>
</feature>
<feature type="binding site" evidence="1">
    <location>
        <position position="78"/>
    </location>
    <ligand>
        <name>Fe cation</name>
        <dbReference type="ChEBI" id="CHEBI:24875"/>
    </ligand>
</feature>
<feature type="binding site" evidence="1">
    <location>
        <position position="82"/>
    </location>
    <ligand>
        <name>Fe cation</name>
        <dbReference type="ChEBI" id="CHEBI:24875"/>
    </ligand>
</feature>
<evidence type="ECO:0000255" key="1">
    <source>
        <dbReference type="HAMAP-Rule" id="MF_01441"/>
    </source>
</evidence>
<gene>
    <name evidence="1" type="primary">dps</name>
    <name type="ordered locus">ESA_02528</name>
</gene>
<dbReference type="EC" id="1.16.-.-" evidence="1"/>
<dbReference type="EMBL" id="CP000783">
    <property type="protein sequence ID" value="ABU77773.1"/>
    <property type="molecule type" value="Genomic_DNA"/>
</dbReference>
<dbReference type="RefSeq" id="WP_007768605.1">
    <property type="nucleotide sequence ID" value="NC_009778.1"/>
</dbReference>
<dbReference type="SMR" id="A7MEY6"/>
<dbReference type="GeneID" id="56731329"/>
<dbReference type="KEGG" id="esa:ESA_02528"/>
<dbReference type="HOGENOM" id="CLU_098183_1_2_6"/>
<dbReference type="Proteomes" id="UP000000260">
    <property type="component" value="Chromosome"/>
</dbReference>
<dbReference type="GO" id="GO:0005737">
    <property type="term" value="C:cytoplasm"/>
    <property type="evidence" value="ECO:0007669"/>
    <property type="project" value="UniProtKB-SubCell"/>
</dbReference>
<dbReference type="GO" id="GO:0003677">
    <property type="term" value="F:DNA binding"/>
    <property type="evidence" value="ECO:0007669"/>
    <property type="project" value="UniProtKB-UniRule"/>
</dbReference>
<dbReference type="GO" id="GO:0008199">
    <property type="term" value="F:ferric iron binding"/>
    <property type="evidence" value="ECO:0007669"/>
    <property type="project" value="UniProtKB-UniRule"/>
</dbReference>
<dbReference type="GO" id="GO:0016722">
    <property type="term" value="F:oxidoreductase activity, acting on metal ions"/>
    <property type="evidence" value="ECO:0007669"/>
    <property type="project" value="InterPro"/>
</dbReference>
<dbReference type="GO" id="GO:0030261">
    <property type="term" value="P:chromosome condensation"/>
    <property type="evidence" value="ECO:0007669"/>
    <property type="project" value="UniProtKB-KW"/>
</dbReference>
<dbReference type="GO" id="GO:0006879">
    <property type="term" value="P:intracellular iron ion homeostasis"/>
    <property type="evidence" value="ECO:0007669"/>
    <property type="project" value="UniProtKB-KW"/>
</dbReference>
<dbReference type="CDD" id="cd01043">
    <property type="entry name" value="DPS"/>
    <property type="match status" value="1"/>
</dbReference>
<dbReference type="Gene3D" id="1.20.1260.10">
    <property type="match status" value="1"/>
</dbReference>
<dbReference type="HAMAP" id="MF_01441">
    <property type="entry name" value="Dps"/>
    <property type="match status" value="1"/>
</dbReference>
<dbReference type="InterPro" id="IPR002177">
    <property type="entry name" value="DPS_DNA-bd"/>
</dbReference>
<dbReference type="InterPro" id="IPR023188">
    <property type="entry name" value="DPS_DNA-bd_CS"/>
</dbReference>
<dbReference type="InterPro" id="IPR023067">
    <property type="entry name" value="Dps_gammaproteobac"/>
</dbReference>
<dbReference type="InterPro" id="IPR012347">
    <property type="entry name" value="Ferritin-like"/>
</dbReference>
<dbReference type="InterPro" id="IPR009078">
    <property type="entry name" value="Ferritin-like_SF"/>
</dbReference>
<dbReference type="InterPro" id="IPR008331">
    <property type="entry name" value="Ferritin_DPS_dom"/>
</dbReference>
<dbReference type="NCBIfam" id="NF006975">
    <property type="entry name" value="PRK09448.1"/>
    <property type="match status" value="1"/>
</dbReference>
<dbReference type="PANTHER" id="PTHR42932:SF3">
    <property type="entry name" value="DNA PROTECTION DURING STARVATION PROTEIN"/>
    <property type="match status" value="1"/>
</dbReference>
<dbReference type="PANTHER" id="PTHR42932">
    <property type="entry name" value="GENERAL STRESS PROTEIN 20U"/>
    <property type="match status" value="1"/>
</dbReference>
<dbReference type="Pfam" id="PF00210">
    <property type="entry name" value="Ferritin"/>
    <property type="match status" value="1"/>
</dbReference>
<dbReference type="PIRSF" id="PIRSF005900">
    <property type="entry name" value="Dps"/>
    <property type="match status" value="1"/>
</dbReference>
<dbReference type="PRINTS" id="PR01346">
    <property type="entry name" value="HELNAPAPROT"/>
</dbReference>
<dbReference type="SUPFAM" id="SSF47240">
    <property type="entry name" value="Ferritin-like"/>
    <property type="match status" value="1"/>
</dbReference>
<dbReference type="PROSITE" id="PS00818">
    <property type="entry name" value="DPS_1"/>
    <property type="match status" value="1"/>
</dbReference>
<dbReference type="PROSITE" id="PS00819">
    <property type="entry name" value="DPS_2"/>
    <property type="match status" value="1"/>
</dbReference>
<comment type="function">
    <text evidence="1">During stationary phase, binds the chromosome non-specifically, forming a highly ordered and stable dps-DNA co-crystal within which chromosomal DNA is condensed and protected from diverse damages. It protects DNA from oxidative damage by sequestering intracellular Fe(2+) ion and storing it in the form of Fe(3+) oxyhydroxide mineral, which can be released after reduction. One hydrogen peroxide oxidizes two Fe(2+) ions, which prevents hydroxyl radical production by the Fenton reaction.</text>
</comment>
<comment type="catalytic activity">
    <reaction evidence="1">
        <text>2 Fe(2+) + H2O2 + 2 H(+) = 2 Fe(3+) + 2 H2O</text>
        <dbReference type="Rhea" id="RHEA:48712"/>
        <dbReference type="ChEBI" id="CHEBI:15377"/>
        <dbReference type="ChEBI" id="CHEBI:15378"/>
        <dbReference type="ChEBI" id="CHEBI:16240"/>
        <dbReference type="ChEBI" id="CHEBI:29033"/>
        <dbReference type="ChEBI" id="CHEBI:29034"/>
    </reaction>
</comment>
<comment type="subunit">
    <text evidence="1">Homododecamer. The 12 subunits form a hollow sphere into which the mineral iron core of up to 500 Fe(3+) can be deposited.</text>
</comment>
<comment type="subcellular location">
    <subcellularLocation>
        <location evidence="1">Cytoplasm</location>
    </subcellularLocation>
</comment>
<comment type="similarity">
    <text evidence="1">Belongs to the Dps family.</text>
</comment>
<protein>
    <recommendedName>
        <fullName evidence="1">DNA protection during starvation protein</fullName>
        <ecNumber evidence="1">1.16.-.-</ecNumber>
    </recommendedName>
</protein>
<proteinExistence type="inferred from homology"/>
<reference key="1">
    <citation type="journal article" date="2010" name="PLoS ONE">
        <title>Genome sequence of Cronobacter sakazakii BAA-894 and comparative genomic hybridization analysis with other Cronobacter species.</title>
        <authorList>
            <person name="Kucerova E."/>
            <person name="Clifton S.W."/>
            <person name="Xia X.Q."/>
            <person name="Long F."/>
            <person name="Porwollik S."/>
            <person name="Fulton L."/>
            <person name="Fronick C."/>
            <person name="Minx P."/>
            <person name="Kyung K."/>
            <person name="Warren W."/>
            <person name="Fulton R."/>
            <person name="Feng D."/>
            <person name="Wollam A."/>
            <person name="Shah N."/>
            <person name="Bhonagiri V."/>
            <person name="Nash W.E."/>
            <person name="Hallsworth-Pepin K."/>
            <person name="Wilson R.K."/>
            <person name="McClelland M."/>
            <person name="Forsythe S.J."/>
        </authorList>
    </citation>
    <scope>NUCLEOTIDE SEQUENCE [LARGE SCALE GENOMIC DNA]</scope>
    <source>
        <strain>ATCC BAA-894</strain>
    </source>
</reference>
<sequence length="167" mass="18589">MGTAKLVKTKASDLLYTRNDVADSDKKATIELLNRQVVNFIDLSLITKQAHWNMRGANFIGVHEMLDGFRTALTGHMDTIAERAVQLGGVALGTTQVINSKTPLKSYPLDIHSVQDHLKELADRYAIVANDVRKAISEAQDEDTADIFTAASRDLDKFLWFIESNIE</sequence>
<organism>
    <name type="scientific">Cronobacter sakazakii (strain ATCC BAA-894)</name>
    <name type="common">Enterobacter sakazakii</name>
    <dbReference type="NCBI Taxonomy" id="290339"/>
    <lineage>
        <taxon>Bacteria</taxon>
        <taxon>Pseudomonadati</taxon>
        <taxon>Pseudomonadota</taxon>
        <taxon>Gammaproteobacteria</taxon>
        <taxon>Enterobacterales</taxon>
        <taxon>Enterobacteriaceae</taxon>
        <taxon>Cronobacter</taxon>
    </lineage>
</organism>
<accession>A7MEY6</accession>